<dbReference type="EMBL" id="AE006468">
    <property type="protein sequence ID" value="AAL21750.1"/>
    <property type="molecule type" value="Genomic_DNA"/>
</dbReference>
<dbReference type="RefSeq" id="NP_461791.1">
    <property type="nucleotide sequence ID" value="NC_003197.2"/>
</dbReference>
<dbReference type="RefSeq" id="WP_001574876.1">
    <property type="nucleotide sequence ID" value="NC_003197.2"/>
</dbReference>
<dbReference type="STRING" id="99287.STM2870"/>
<dbReference type="PaxDb" id="99287-STM2870"/>
<dbReference type="GeneID" id="1254393"/>
<dbReference type="KEGG" id="stm:STM2870"/>
<dbReference type="PATRIC" id="fig|99287.12.peg.3026"/>
<dbReference type="HOGENOM" id="CLU_092002_0_0_6"/>
<dbReference type="OMA" id="MACQRHR"/>
<dbReference type="BioCyc" id="SENT99287:STM2870-MONOMER"/>
<dbReference type="Proteomes" id="UP000001014">
    <property type="component" value="Chromosome"/>
</dbReference>
<dbReference type="InterPro" id="IPR013388">
    <property type="entry name" value="T3SS_OrgA/MxiK"/>
</dbReference>
<dbReference type="NCBIfam" id="TIGR02555">
    <property type="entry name" value="OrgA_MxiK"/>
    <property type="match status" value="1"/>
</dbReference>
<dbReference type="NCBIfam" id="NF011851">
    <property type="entry name" value="PRK15323.1"/>
    <property type="match status" value="1"/>
</dbReference>
<dbReference type="Pfam" id="PF09482">
    <property type="entry name" value="OrgA_MxiK"/>
    <property type="match status" value="1"/>
</dbReference>
<reference key="1">
    <citation type="journal article" date="2001" name="Nature">
        <title>Complete genome sequence of Salmonella enterica serovar Typhimurium LT2.</title>
        <authorList>
            <person name="McClelland M."/>
            <person name="Sanderson K.E."/>
            <person name="Spieth J."/>
            <person name="Clifton S.W."/>
            <person name="Latreille P."/>
            <person name="Courtney L."/>
            <person name="Porwollik S."/>
            <person name="Ali J."/>
            <person name="Dante M."/>
            <person name="Du F."/>
            <person name="Hou S."/>
            <person name="Layman D."/>
            <person name="Leonard S."/>
            <person name="Nguyen C."/>
            <person name="Scott K."/>
            <person name="Holmes A."/>
            <person name="Grewal N."/>
            <person name="Mulvaney E."/>
            <person name="Ryan E."/>
            <person name="Sun H."/>
            <person name="Florea L."/>
            <person name="Miller W."/>
            <person name="Stoneking T."/>
            <person name="Nhan M."/>
            <person name="Waterston R."/>
            <person name="Wilson R.K."/>
        </authorList>
    </citation>
    <scope>NUCLEOTIDE SEQUENCE [LARGE SCALE GENOMIC DNA]</scope>
    <source>
        <strain>LT2 / SGSC1412 / ATCC 700720</strain>
    </source>
</reference>
<reference key="2">
    <citation type="journal article" date="2000" name="Infect. Immun.">
        <title>Transcriptional organization and function of invasion genes within Salmonella enterica serovar Typhimurium pathogenicity island 1, including the prgH, prgI, prgJ, prgK, orgA, orgB, and orgC genes.</title>
        <authorList>
            <person name="Klein J.R."/>
            <person name="Fahlen T.F."/>
            <person name="Jones B.D."/>
        </authorList>
    </citation>
    <scope>CHARACTERIZATION</scope>
    <source>
        <strain>SL1344</strain>
    </source>
</reference>
<accession>P0CL44</accession>
<accession>P40823</accession>
<accession>P58653</accession>
<feature type="chain" id="PRO_0000058082" description="Oxygen-regulated invasion protein OrgA">
    <location>
        <begin position="1"/>
        <end position="199"/>
    </location>
</feature>
<gene>
    <name type="primary">orgA</name>
    <name type="ordered locus">STM2870</name>
</gene>
<protein>
    <recommendedName>
        <fullName>Oxygen-regulated invasion protein OrgA</fullName>
    </recommendedName>
</protein>
<name>ORGA_SALTY</name>
<sequence>MIRRNRQMNRQPLPIIWQRIIFDPLSYIHPQRLQIAPEMIVRPAARAAANELILAAWRLKNGEKECIQNSLTQLWLRQWRRLPQVAYLLGCHKLRADLARQGALLGLPDWAQAFLAMHQGTSLSVCNKAPNHRFLLSVGYAQLNALNEFLPESLAQRFPLLFPPFIEEALKQDAVEMSILLLALQYAQKYPNTVPAFAC</sequence>
<comment type="function">
    <text>Oxygen-regulated protein required for bacterial internalization.</text>
</comment>
<proteinExistence type="evidence at protein level"/>
<keyword id="KW-1185">Reference proteome</keyword>
<keyword id="KW-0843">Virulence</keyword>
<organism>
    <name type="scientific">Salmonella typhimurium (strain LT2 / SGSC1412 / ATCC 700720)</name>
    <dbReference type="NCBI Taxonomy" id="99287"/>
    <lineage>
        <taxon>Bacteria</taxon>
        <taxon>Pseudomonadati</taxon>
        <taxon>Pseudomonadota</taxon>
        <taxon>Gammaproteobacteria</taxon>
        <taxon>Enterobacterales</taxon>
        <taxon>Enterobacteriaceae</taxon>
        <taxon>Salmonella</taxon>
    </lineage>
</organism>